<reference key="1">
    <citation type="journal article" date="1992" name="Genetics">
        <title>The mitochondrial genomes of two nematodes, Caenorhabditis elegans and Ascaris suum.</title>
        <authorList>
            <person name="Okimoto R."/>
            <person name="Macfarlane J.L."/>
            <person name="Clary D.O."/>
            <person name="Wolstenholme D.R."/>
        </authorList>
    </citation>
    <scope>NUCLEOTIDE SEQUENCE [GENOMIC DNA]</scope>
    <source>
        <tissue>Body wall muscle</tissue>
        <tissue>Egg</tissue>
    </source>
</reference>
<accession>P24880</accession>
<keyword id="KW-0249">Electron transport</keyword>
<keyword id="KW-0472">Membrane</keyword>
<keyword id="KW-0496">Mitochondrion</keyword>
<keyword id="KW-0520">NAD</keyword>
<keyword id="KW-0679">Respiratory chain</keyword>
<keyword id="KW-1278">Translocase</keyword>
<keyword id="KW-0812">Transmembrane</keyword>
<keyword id="KW-1133">Transmembrane helix</keyword>
<keyword id="KW-0813">Transport</keyword>
<keyword id="KW-0830">Ubiquinone</keyword>
<sequence length="409" mass="47065">MLDILLFSLYFFFEPVLFFFFMVVFGFVALNNYSWLGCFYFFDSFSFILLIVMSLFILGVVLLSESNFMLLLLSEVLVVVCVFFFVPSNVILMYMYFELSMFPILVMILGYGSQIEKINSSYYLIFYAALCSFPFLFVYFKSFFFISLVYFDFNLSWEMVFVLSLSFMMKFPVYFLHLWLPKAHVEAPTTASMLLAGLLLKLGTAGFLRILGCLSFVHNNVWIVLAFLGMILASFCCMFQSDAKALAAYSSITHMSFVLMALVFIIMSGKTGGVILMLAHGYTSTLMFYLVGEFYHVSGSRMVYYMSSFFGSGMIMALLFAVVFLSNMGTPPSLSFLSEFIVISSSLNMMKFSFWVLFVYFFSAFYYSIYLLTSSVMGKGYVNFSIWNVGFSVPLVFMMYNIFWMSVFF</sequence>
<evidence type="ECO:0000250" key="1"/>
<evidence type="ECO:0000255" key="2"/>
<evidence type="ECO:0000305" key="3"/>
<dbReference type="EC" id="7.1.1.2"/>
<dbReference type="EMBL" id="X54253">
    <property type="protein sequence ID" value="CAA38170.1"/>
    <property type="molecule type" value="Genomic_DNA"/>
</dbReference>
<dbReference type="PIR" id="S26021">
    <property type="entry name" value="S26021"/>
</dbReference>
<dbReference type="RefSeq" id="NP_006948.1">
    <property type="nucleotide sequence ID" value="NC_001327.1"/>
</dbReference>
<dbReference type="SMR" id="P24880"/>
<dbReference type="GeneID" id="807666"/>
<dbReference type="CTD" id="4538"/>
<dbReference type="GO" id="GO:0031966">
    <property type="term" value="C:mitochondrial membrane"/>
    <property type="evidence" value="ECO:0007669"/>
    <property type="project" value="UniProtKB-SubCell"/>
</dbReference>
<dbReference type="GO" id="GO:0008137">
    <property type="term" value="F:NADH dehydrogenase (ubiquinone) activity"/>
    <property type="evidence" value="ECO:0007669"/>
    <property type="project" value="UniProtKB-EC"/>
</dbReference>
<dbReference type="GO" id="GO:0048039">
    <property type="term" value="F:ubiquinone binding"/>
    <property type="evidence" value="ECO:0007669"/>
    <property type="project" value="TreeGrafter"/>
</dbReference>
<dbReference type="GO" id="GO:0042773">
    <property type="term" value="P:ATP synthesis coupled electron transport"/>
    <property type="evidence" value="ECO:0007669"/>
    <property type="project" value="InterPro"/>
</dbReference>
<dbReference type="GO" id="GO:0015990">
    <property type="term" value="P:electron transport coupled proton transport"/>
    <property type="evidence" value="ECO:0007669"/>
    <property type="project" value="TreeGrafter"/>
</dbReference>
<dbReference type="InterPro" id="IPR003918">
    <property type="entry name" value="NADH_UbQ_OxRdtase"/>
</dbReference>
<dbReference type="InterPro" id="IPR001750">
    <property type="entry name" value="ND/Mrp_TM"/>
</dbReference>
<dbReference type="PANTHER" id="PTHR43507">
    <property type="entry name" value="NADH-UBIQUINONE OXIDOREDUCTASE CHAIN 4"/>
    <property type="match status" value="1"/>
</dbReference>
<dbReference type="PANTHER" id="PTHR43507:SF20">
    <property type="entry name" value="NADH-UBIQUINONE OXIDOREDUCTASE CHAIN 4"/>
    <property type="match status" value="1"/>
</dbReference>
<dbReference type="Pfam" id="PF00361">
    <property type="entry name" value="Proton_antipo_M"/>
    <property type="match status" value="1"/>
</dbReference>
<dbReference type="PRINTS" id="PR01437">
    <property type="entry name" value="NUOXDRDTASE4"/>
</dbReference>
<comment type="function">
    <text evidence="1">Core subunit of the mitochondrial membrane respiratory chain NADH dehydrogenase (Complex I) that is believed to belong to the minimal assembly required for catalysis. Complex I functions in the transfer of electrons from NADH to the respiratory chain. The immediate electron acceptor for the enzyme is believed to be ubiquinone (By similarity).</text>
</comment>
<comment type="catalytic activity">
    <reaction>
        <text>a ubiquinone + NADH + 5 H(+)(in) = a ubiquinol + NAD(+) + 4 H(+)(out)</text>
        <dbReference type="Rhea" id="RHEA:29091"/>
        <dbReference type="Rhea" id="RHEA-COMP:9565"/>
        <dbReference type="Rhea" id="RHEA-COMP:9566"/>
        <dbReference type="ChEBI" id="CHEBI:15378"/>
        <dbReference type="ChEBI" id="CHEBI:16389"/>
        <dbReference type="ChEBI" id="CHEBI:17976"/>
        <dbReference type="ChEBI" id="CHEBI:57540"/>
        <dbReference type="ChEBI" id="CHEBI:57945"/>
        <dbReference type="EC" id="7.1.1.2"/>
    </reaction>
</comment>
<comment type="subcellular location">
    <subcellularLocation>
        <location evidence="1">Mitochondrion membrane</location>
        <topology evidence="1">Multi-pass membrane protein</topology>
    </subcellularLocation>
</comment>
<comment type="similarity">
    <text evidence="3">Belongs to the complex I subunit 4 family.</text>
</comment>
<feature type="chain" id="PRO_0000117893" description="NADH-ubiquinone oxidoreductase chain 4">
    <location>
        <begin position="1"/>
        <end position="409"/>
    </location>
</feature>
<feature type="transmembrane region" description="Helical" evidence="2">
    <location>
        <begin position="9"/>
        <end position="29"/>
    </location>
</feature>
<feature type="transmembrane region" description="Helical" evidence="2">
    <location>
        <begin position="44"/>
        <end position="64"/>
    </location>
</feature>
<feature type="transmembrane region" description="Helical" evidence="2">
    <location>
        <begin position="68"/>
        <end position="88"/>
    </location>
</feature>
<feature type="transmembrane region" description="Helical" evidence="2">
    <location>
        <begin position="90"/>
        <end position="110"/>
    </location>
</feature>
<feature type="transmembrane region" description="Helical" evidence="2">
    <location>
        <begin position="125"/>
        <end position="145"/>
    </location>
</feature>
<feature type="transmembrane region" description="Helical" evidence="2">
    <location>
        <begin position="160"/>
        <end position="180"/>
    </location>
</feature>
<feature type="transmembrane region" description="Helical" evidence="2">
    <location>
        <begin position="194"/>
        <end position="214"/>
    </location>
</feature>
<feature type="transmembrane region" description="Helical" evidence="2">
    <location>
        <begin position="221"/>
        <end position="241"/>
    </location>
</feature>
<feature type="transmembrane region" description="Helical" evidence="2">
    <location>
        <begin position="246"/>
        <end position="268"/>
    </location>
</feature>
<feature type="transmembrane region" description="Helical" evidence="2">
    <location>
        <begin position="273"/>
        <end position="295"/>
    </location>
</feature>
<feature type="transmembrane region" description="Helical" evidence="2">
    <location>
        <begin position="305"/>
        <end position="325"/>
    </location>
</feature>
<feature type="transmembrane region" description="Helical" evidence="2">
    <location>
        <begin position="352"/>
        <end position="372"/>
    </location>
</feature>
<feature type="transmembrane region" description="Helical" evidence="2">
    <location>
        <begin position="389"/>
        <end position="409"/>
    </location>
</feature>
<proteinExistence type="inferred from homology"/>
<gene>
    <name type="primary">ND4</name>
</gene>
<geneLocation type="mitochondrion"/>
<name>NU4M_ASCSU</name>
<protein>
    <recommendedName>
        <fullName>NADH-ubiquinone oxidoreductase chain 4</fullName>
        <ecNumber>7.1.1.2</ecNumber>
    </recommendedName>
    <alternativeName>
        <fullName>NADH dehydrogenase subunit 4</fullName>
    </alternativeName>
</protein>
<organism>
    <name type="scientific">Ascaris suum</name>
    <name type="common">Pig roundworm</name>
    <name type="synonym">Ascaris lumbricoides</name>
    <dbReference type="NCBI Taxonomy" id="6253"/>
    <lineage>
        <taxon>Eukaryota</taxon>
        <taxon>Metazoa</taxon>
        <taxon>Ecdysozoa</taxon>
        <taxon>Nematoda</taxon>
        <taxon>Chromadorea</taxon>
        <taxon>Rhabditida</taxon>
        <taxon>Spirurina</taxon>
        <taxon>Ascaridomorpha</taxon>
        <taxon>Ascaridoidea</taxon>
        <taxon>Ascarididae</taxon>
        <taxon>Ascaris</taxon>
    </lineage>
</organism>